<protein>
    <recommendedName>
        <fullName>Aerotaxis receptor</fullName>
    </recommendedName>
</protein>
<reference key="1">
    <citation type="journal article" date="1997" name="Science">
        <title>The complete genome sequence of Escherichia coli K-12.</title>
        <authorList>
            <person name="Blattner F.R."/>
            <person name="Plunkett G. III"/>
            <person name="Bloch C.A."/>
            <person name="Perna N.T."/>
            <person name="Burland V."/>
            <person name="Riley M."/>
            <person name="Collado-Vides J."/>
            <person name="Glasner J.D."/>
            <person name="Rode C.K."/>
            <person name="Mayhew G.F."/>
            <person name="Gregor J."/>
            <person name="Davis N.W."/>
            <person name="Kirkpatrick H.A."/>
            <person name="Goeden M.A."/>
            <person name="Rose D.J."/>
            <person name="Mau B."/>
            <person name="Shao Y."/>
        </authorList>
    </citation>
    <scope>NUCLEOTIDE SEQUENCE [LARGE SCALE GENOMIC DNA]</scope>
    <source>
        <strain>K12 / MG1655 / ATCC 47076</strain>
    </source>
</reference>
<reference key="2">
    <citation type="journal article" date="2006" name="Mol. Syst. Biol.">
        <title>Highly accurate genome sequences of Escherichia coli K-12 strains MG1655 and W3110.</title>
        <authorList>
            <person name="Hayashi K."/>
            <person name="Morooka N."/>
            <person name="Yamamoto Y."/>
            <person name="Fujita K."/>
            <person name="Isono K."/>
            <person name="Choi S."/>
            <person name="Ohtsubo E."/>
            <person name="Baba T."/>
            <person name="Wanner B.L."/>
            <person name="Mori H."/>
            <person name="Horiuchi T."/>
        </authorList>
    </citation>
    <scope>NUCLEOTIDE SEQUENCE [LARGE SCALE GENOMIC DNA]</scope>
    <source>
        <strain>K12 / W3110 / ATCC 27325 / DSM 5911</strain>
    </source>
</reference>
<reference key="3">
    <citation type="journal article" date="1997" name="J. Bacteriol.">
        <title>A signal transducer for aerotaxis in Escherichia coli.</title>
        <authorList>
            <person name="Bibikov S.I."/>
            <person name="Biran R."/>
            <person name="Rudd K.E."/>
            <person name="Parkinson J.S."/>
        </authorList>
    </citation>
    <scope>FUNCTION</scope>
</reference>
<reference key="4">
    <citation type="journal article" date="1997" name="Proc. Natl. Acad. Sci. U.S.A.">
        <title>The Aer protein and the serine chemoreceptor Tsr independently sense intracellular energy levels and transduce oxygen, redox, and energy signals for Escherichia coli behavior.</title>
        <authorList>
            <person name="Rebbapragada A."/>
            <person name="Johnson M.S."/>
            <person name="Harding G.P."/>
            <person name="Zuccarelli A.J."/>
            <person name="Fletcher H.M."/>
            <person name="Zhulin I.B."/>
            <person name="Taylor B.L."/>
        </authorList>
    </citation>
    <scope>FUNCTION</scope>
</reference>
<reference key="5">
    <citation type="journal article" date="2005" name="Science">
        <title>Global topology analysis of the Escherichia coli inner membrane proteome.</title>
        <authorList>
            <person name="Daley D.O."/>
            <person name="Rapp M."/>
            <person name="Granseth E."/>
            <person name="Melen K."/>
            <person name="Drew D."/>
            <person name="von Heijne G."/>
        </authorList>
    </citation>
    <scope>TOPOLOGY [LARGE SCALE ANALYSIS]</scope>
    <source>
        <strain>K12 / MG1655 / ATCC 47076</strain>
    </source>
</reference>
<reference key="6">
    <citation type="journal article" date="2012" name="Mol. Microbiol.">
        <title>Isolation and identification of new inner membrane-associated proteins that localize to cell poles in Escherichia coli.</title>
        <authorList>
            <person name="Li G."/>
            <person name="Young K.D."/>
        </authorList>
    </citation>
    <scope>SUBCELLULAR LOCATION</scope>
    <source>
        <strain>K12 / MG1655 / ATCC 47076</strain>
    </source>
</reference>
<organism>
    <name type="scientific">Escherichia coli (strain K12)</name>
    <dbReference type="NCBI Taxonomy" id="83333"/>
    <lineage>
        <taxon>Bacteria</taxon>
        <taxon>Pseudomonadati</taxon>
        <taxon>Pseudomonadota</taxon>
        <taxon>Gammaproteobacteria</taxon>
        <taxon>Enterobacterales</taxon>
        <taxon>Enterobacteriaceae</taxon>
        <taxon>Escherichia</taxon>
    </lineage>
</organism>
<sequence length="506" mass="55066">MSSHPYVTQQNTPLADDTTLMSTTDLQSYITHANDTFVQVSGYTLQELQGQPHNMVRHPDMPKAAFADMWFTLKKGEPWSGIVKNRRKNGDHYWVRANAVPMVREGKISGYMSIRTRATDEEIAAVEPLYKALNAGRTSKRIHKGLVVRKGWLGKLPSLPLRWRARGVMTLMFILLAAMLWFVAAPVVTYILCALVVLLASACFEWQIVRPIENVAHQALKVATGERNSVEHLNRSDELGLTLRAVGQLGLMCRWLINDVSSQVSSVRNGSETLAKGTDELNEHTQQTVDNVQQTVATMNQMAASVKQNSATASAADKLSITASNAAVQGGEAMTTVIKTMDDIADSTQRIGTITSLINDIAFQTNILALNAAVEAARAGEQGKGFAVVAGEVRHLASRSANAANDIRKLIDASADKVQSGSQQVHAAGRTMEDIVAQVKNVTQLIAQISHSTLEQADGLSSLTRAVDELNLITQKNAELVEESAQVSAMVKHRASRLEDAVTVLH</sequence>
<gene>
    <name type="primary">aer</name>
    <name type="synonym">air</name>
    <name type="synonym">yqjJ</name>
    <name type="ordered locus">b3072</name>
    <name type="ordered locus">JW3043</name>
</gene>
<name>AER_ECOLI</name>
<evidence type="ECO:0000255" key="1"/>
<evidence type="ECO:0000255" key="2">
    <source>
        <dbReference type="PROSITE-ProRule" id="PRU00284"/>
    </source>
</evidence>
<evidence type="ECO:0000269" key="3">
    <source>
    </source>
</evidence>
<evidence type="ECO:0000269" key="4">
    <source>
    </source>
</evidence>
<evidence type="ECO:0000269" key="5">
    <source>
    </source>
</evidence>
<evidence type="ECO:0000305" key="6"/>
<evidence type="ECO:0007829" key="7">
    <source>
        <dbReference type="PDB" id="8DIK"/>
    </source>
</evidence>
<keyword id="KW-0002">3D-structure</keyword>
<keyword id="KW-0997">Cell inner membrane</keyword>
<keyword id="KW-1003">Cell membrane</keyword>
<keyword id="KW-0145">Chemotaxis</keyword>
<keyword id="KW-0274">FAD</keyword>
<keyword id="KW-0285">Flavoprotein</keyword>
<keyword id="KW-0472">Membrane</keyword>
<keyword id="KW-0488">Methylation</keyword>
<keyword id="KW-1185">Reference proteome</keyword>
<keyword id="KW-0807">Transducer</keyword>
<keyword id="KW-0812">Transmembrane</keyword>
<keyword id="KW-1133">Transmembrane helix</keyword>
<accession>P50466</accession>
<accession>Q2M9D4</accession>
<proteinExistence type="evidence at protein level"/>
<dbReference type="EMBL" id="U28379">
    <property type="protein sequence ID" value="AAA89151.1"/>
    <property type="molecule type" value="Genomic_DNA"/>
</dbReference>
<dbReference type="EMBL" id="U00096">
    <property type="protein sequence ID" value="AAC76107.1"/>
    <property type="molecule type" value="Genomic_DNA"/>
</dbReference>
<dbReference type="EMBL" id="AP009048">
    <property type="protein sequence ID" value="BAE77122.1"/>
    <property type="molecule type" value="Genomic_DNA"/>
</dbReference>
<dbReference type="PIR" id="E65095">
    <property type="entry name" value="E65095"/>
</dbReference>
<dbReference type="RefSeq" id="NP_417543.1">
    <property type="nucleotide sequence ID" value="NC_000913.3"/>
</dbReference>
<dbReference type="RefSeq" id="WP_000094721.1">
    <property type="nucleotide sequence ID" value="NZ_LN832404.1"/>
</dbReference>
<dbReference type="PDB" id="8DIK">
    <property type="method" value="X-ray"/>
    <property type="resolution" value="2.40 A"/>
    <property type="chains" value="A/B=8-134"/>
</dbReference>
<dbReference type="PDBsum" id="8DIK"/>
<dbReference type="SMR" id="P50466"/>
<dbReference type="BioGRID" id="4262399">
    <property type="interactions" value="191"/>
</dbReference>
<dbReference type="DIP" id="DIP-9061N"/>
<dbReference type="FunCoup" id="P50466">
    <property type="interactions" value="216"/>
</dbReference>
<dbReference type="IntAct" id="P50466">
    <property type="interactions" value="4"/>
</dbReference>
<dbReference type="STRING" id="511145.b3072"/>
<dbReference type="TCDB" id="9.B.334.1.3">
    <property type="family name" value="the archael n-terminal transmembrane domain linked to a sensor kinase or mcp domain (n-tm/sk/mcp) family"/>
</dbReference>
<dbReference type="PaxDb" id="511145-b3072"/>
<dbReference type="EnsemblBacteria" id="AAC76107">
    <property type="protein sequence ID" value="AAC76107"/>
    <property type="gene ID" value="b3072"/>
</dbReference>
<dbReference type="GeneID" id="945301"/>
<dbReference type="KEGG" id="ecj:JW3043"/>
<dbReference type="KEGG" id="eco:b3072"/>
<dbReference type="KEGG" id="ecoc:C3026_16780"/>
<dbReference type="PATRIC" id="fig|1411691.4.peg.3658"/>
<dbReference type="EchoBASE" id="EB2789"/>
<dbReference type="eggNOG" id="COG0840">
    <property type="taxonomic scope" value="Bacteria"/>
</dbReference>
<dbReference type="HOGENOM" id="CLU_000445_107_26_6"/>
<dbReference type="InParanoid" id="P50466"/>
<dbReference type="OMA" id="YQRINQG"/>
<dbReference type="OrthoDB" id="9812260at2"/>
<dbReference type="PhylomeDB" id="P50466"/>
<dbReference type="BioCyc" id="EcoCyc:G7595-MONOMER"/>
<dbReference type="PRO" id="PR:P50466"/>
<dbReference type="Proteomes" id="UP000000625">
    <property type="component" value="Chromosome"/>
</dbReference>
<dbReference type="GO" id="GO:0005886">
    <property type="term" value="C:plasma membrane"/>
    <property type="evidence" value="ECO:0000314"/>
    <property type="project" value="EcoCyc"/>
</dbReference>
<dbReference type="GO" id="GO:0042802">
    <property type="term" value="F:identical protein binding"/>
    <property type="evidence" value="ECO:0000353"/>
    <property type="project" value="IntAct"/>
</dbReference>
<dbReference type="GO" id="GO:0004888">
    <property type="term" value="F:transmembrane signaling receptor activity"/>
    <property type="evidence" value="ECO:0000315"/>
    <property type="project" value="EcoCyc"/>
</dbReference>
<dbReference type="GO" id="GO:0006935">
    <property type="term" value="P:chemotaxis"/>
    <property type="evidence" value="ECO:0000318"/>
    <property type="project" value="GO_Central"/>
</dbReference>
<dbReference type="GO" id="GO:0052131">
    <property type="term" value="P:positive aerotaxis"/>
    <property type="evidence" value="ECO:0000315"/>
    <property type="project" value="EcoCyc"/>
</dbReference>
<dbReference type="GO" id="GO:0007165">
    <property type="term" value="P:signal transduction"/>
    <property type="evidence" value="ECO:0000315"/>
    <property type="project" value="EcoCyc"/>
</dbReference>
<dbReference type="CDD" id="cd11386">
    <property type="entry name" value="MCP_signal"/>
    <property type="match status" value="1"/>
</dbReference>
<dbReference type="CDD" id="cd00130">
    <property type="entry name" value="PAS"/>
    <property type="match status" value="1"/>
</dbReference>
<dbReference type="FunFam" id="3.30.450.20:FF:000046">
    <property type="entry name" value="Aerotaxis sensor receptor"/>
    <property type="match status" value="1"/>
</dbReference>
<dbReference type="FunFam" id="1.10.287.950:FF:000001">
    <property type="entry name" value="Methyl-accepting chemotaxis sensory transducer"/>
    <property type="match status" value="1"/>
</dbReference>
<dbReference type="Gene3D" id="1.10.287.950">
    <property type="entry name" value="Methyl-accepting chemotaxis protein"/>
    <property type="match status" value="1"/>
</dbReference>
<dbReference type="Gene3D" id="3.30.450.20">
    <property type="entry name" value="PAS domain"/>
    <property type="match status" value="1"/>
</dbReference>
<dbReference type="InterPro" id="IPR004090">
    <property type="entry name" value="Chemotax_Me-accpt_rcpt"/>
</dbReference>
<dbReference type="InterPro" id="IPR003660">
    <property type="entry name" value="HAMP_dom"/>
</dbReference>
<dbReference type="InterPro" id="IPR051310">
    <property type="entry name" value="MCP_chemotaxis"/>
</dbReference>
<dbReference type="InterPro" id="IPR004089">
    <property type="entry name" value="MCPsignal_dom"/>
</dbReference>
<dbReference type="InterPro" id="IPR001610">
    <property type="entry name" value="PAC"/>
</dbReference>
<dbReference type="InterPro" id="IPR000014">
    <property type="entry name" value="PAS"/>
</dbReference>
<dbReference type="InterPro" id="IPR035965">
    <property type="entry name" value="PAS-like_dom_sf"/>
</dbReference>
<dbReference type="InterPro" id="IPR013655">
    <property type="entry name" value="PAS_fold_3"/>
</dbReference>
<dbReference type="NCBIfam" id="TIGR00229">
    <property type="entry name" value="sensory_box"/>
    <property type="match status" value="1"/>
</dbReference>
<dbReference type="PANTHER" id="PTHR43531:SF7">
    <property type="entry name" value="AEROTAXIS RECEPTOR"/>
    <property type="match status" value="1"/>
</dbReference>
<dbReference type="PANTHER" id="PTHR43531">
    <property type="entry name" value="PROTEIN ICFG"/>
    <property type="match status" value="1"/>
</dbReference>
<dbReference type="Pfam" id="PF00672">
    <property type="entry name" value="HAMP"/>
    <property type="match status" value="1"/>
</dbReference>
<dbReference type="Pfam" id="PF00015">
    <property type="entry name" value="MCPsignal"/>
    <property type="match status" value="1"/>
</dbReference>
<dbReference type="Pfam" id="PF08447">
    <property type="entry name" value="PAS_3"/>
    <property type="match status" value="1"/>
</dbReference>
<dbReference type="PRINTS" id="PR00260">
    <property type="entry name" value="CHEMTRNSDUCR"/>
</dbReference>
<dbReference type="SMART" id="SM00283">
    <property type="entry name" value="MA"/>
    <property type="match status" value="1"/>
</dbReference>
<dbReference type="SMART" id="SM00086">
    <property type="entry name" value="PAC"/>
    <property type="match status" value="1"/>
</dbReference>
<dbReference type="SUPFAM" id="SSF58104">
    <property type="entry name" value="Methyl-accepting chemotaxis protein (MCP) signaling domain"/>
    <property type="match status" value="1"/>
</dbReference>
<dbReference type="SUPFAM" id="SSF55785">
    <property type="entry name" value="PYP-like sensor domain (PAS domain)"/>
    <property type="match status" value="1"/>
</dbReference>
<dbReference type="PROSITE" id="PS50111">
    <property type="entry name" value="CHEMOTAXIS_TRANSDUC_2"/>
    <property type="match status" value="1"/>
</dbReference>
<comment type="function">
    <text evidence="4 5">Signal transducer for aerotaxis. The aerotactic response is the accumulation of cells around air bubbles. The nature of the sensory stimulus detected by this protein is the proton motive force or cellular redox state. It uses a FAD prosthetic group as a redox sensor to monitor oxygen levels.</text>
</comment>
<comment type="interaction">
    <interactant intactId="EBI-1130981">
        <id>P50466</id>
    </interactant>
    <interactant intactId="EBI-1130981">
        <id>P50466</id>
        <label>aer</label>
    </interactant>
    <organismsDiffer>false</organismsDiffer>
    <experiments>4</experiments>
</comment>
<comment type="subcellular location">
    <subcellularLocation>
        <location evidence="3">Cell inner membrane</location>
        <topology evidence="3">Multi-pass membrane protein</topology>
    </subcellularLocation>
    <text>Predominantly localized to one cell pole in mid-to-late exponential phase, with a few smaller foci elsewhere in the cell.</text>
</comment>
<comment type="similarity">
    <text evidence="6">Belongs to the methyl-accepting chemotaxis (MCP) protein family.</text>
</comment>
<feature type="chain" id="PRO_0000110565" description="Aerotaxis receptor">
    <location>
        <begin position="1"/>
        <end position="506"/>
    </location>
</feature>
<feature type="topological domain" description="Cytoplasmic" evidence="1">
    <location>
        <begin position="1"/>
        <end position="166"/>
    </location>
</feature>
<feature type="transmembrane region" description="Helical" evidence="1">
    <location>
        <begin position="167"/>
        <end position="186"/>
    </location>
</feature>
<feature type="topological domain" description="Periplasmic" evidence="1">
    <location>
        <begin position="187"/>
        <end position="190"/>
    </location>
</feature>
<feature type="transmembrane region" description="Helical" evidence="1">
    <location>
        <begin position="191"/>
        <end position="209"/>
    </location>
</feature>
<feature type="topological domain" description="Cytoplasmic" evidence="1">
    <location>
        <begin position="210"/>
        <end position="506"/>
    </location>
</feature>
<feature type="domain" description="Methyl-accepting transducer" evidence="2">
    <location>
        <begin position="263"/>
        <end position="492"/>
    </location>
</feature>
<feature type="strand" evidence="7">
    <location>
        <begin position="19"/>
        <end position="24"/>
    </location>
</feature>
<feature type="strand" evidence="7">
    <location>
        <begin position="28"/>
        <end position="33"/>
    </location>
</feature>
<feature type="helix" evidence="7">
    <location>
        <begin position="35"/>
        <end position="41"/>
    </location>
</feature>
<feature type="helix" evidence="7">
    <location>
        <begin position="45"/>
        <end position="48"/>
    </location>
</feature>
<feature type="strand" evidence="7">
    <location>
        <begin position="55"/>
        <end position="57"/>
    </location>
</feature>
<feature type="helix" evidence="7">
    <location>
        <begin position="63"/>
        <end position="74"/>
    </location>
</feature>
<feature type="strand" evidence="7">
    <location>
        <begin position="79"/>
        <end position="86"/>
    </location>
</feature>
<feature type="strand" evidence="7">
    <location>
        <begin position="92"/>
        <end position="104"/>
    </location>
</feature>
<feature type="strand" evidence="7">
    <location>
        <begin position="107"/>
        <end position="117"/>
    </location>
</feature>
<feature type="helix" evidence="7">
    <location>
        <begin position="120"/>
        <end position="130"/>
    </location>
</feature>
<feature type="turn" evidence="7">
    <location>
        <begin position="131"/>
        <end position="133"/>
    </location>
</feature>